<protein>
    <recommendedName>
        <fullName evidence="1">Putative pterin-4-alpha-carbinolamine dehydratase</fullName>
        <shortName evidence="1">PHS</shortName>
        <ecNumber evidence="1">4.2.1.96</ecNumber>
    </recommendedName>
    <alternativeName>
        <fullName evidence="1">4-alpha-hydroxy-tetrahydropterin dehydratase</fullName>
    </alternativeName>
    <alternativeName>
        <fullName evidence="1">Pterin carbinolamine dehydratase</fullName>
        <shortName evidence="1">PCD</shortName>
    </alternativeName>
</protein>
<reference key="1">
    <citation type="journal article" date="2008" name="PLoS ONE">
        <title>Genetic basis of virulence attenuation revealed by comparative genomic analysis of Mycobacterium tuberculosis strain H37Ra versus H37Rv.</title>
        <authorList>
            <person name="Zheng H."/>
            <person name="Lu L."/>
            <person name="Wang B."/>
            <person name="Pu S."/>
            <person name="Zhang X."/>
            <person name="Zhu G."/>
            <person name="Shi W."/>
            <person name="Zhang L."/>
            <person name="Wang H."/>
            <person name="Wang S."/>
            <person name="Zhao G."/>
            <person name="Zhang Y."/>
        </authorList>
    </citation>
    <scope>NUCLEOTIDE SEQUENCE [LARGE SCALE GENOMIC DNA]</scope>
    <source>
        <strain>ATCC 25177 / H37Ra</strain>
    </source>
</reference>
<proteinExistence type="inferred from homology"/>
<sequence length="94" mass="10380">MAVLTDEQVDAALHDLNGWQRAGGVLRRSIKFPTFMAGIDAVRRVAERAEEVNHHPDIDIRWRTVTFALVTHAVGGITENDIAMAHDIDAMFGA</sequence>
<gene>
    <name type="ordered locus">MRA_1170</name>
</gene>
<evidence type="ECO:0000255" key="1">
    <source>
        <dbReference type="HAMAP-Rule" id="MF_00434"/>
    </source>
</evidence>
<dbReference type="EC" id="4.2.1.96" evidence="1"/>
<dbReference type="EMBL" id="CP000611">
    <property type="protein sequence ID" value="ABQ72908.1"/>
    <property type="molecule type" value="Genomic_DNA"/>
</dbReference>
<dbReference type="RefSeq" id="WP_003406082.1">
    <property type="nucleotide sequence ID" value="NZ_CP016972.1"/>
</dbReference>
<dbReference type="SMR" id="A5U1K8"/>
<dbReference type="KEGG" id="mra:MRA_1170"/>
<dbReference type="eggNOG" id="COG2154">
    <property type="taxonomic scope" value="Bacteria"/>
</dbReference>
<dbReference type="HOGENOM" id="CLU_081974_4_3_11"/>
<dbReference type="Proteomes" id="UP000001988">
    <property type="component" value="Chromosome"/>
</dbReference>
<dbReference type="GO" id="GO:0008124">
    <property type="term" value="F:4-alpha-hydroxytetrahydrobiopterin dehydratase activity"/>
    <property type="evidence" value="ECO:0007669"/>
    <property type="project" value="UniProtKB-UniRule"/>
</dbReference>
<dbReference type="GO" id="GO:0006729">
    <property type="term" value="P:tetrahydrobiopterin biosynthetic process"/>
    <property type="evidence" value="ECO:0007669"/>
    <property type="project" value="InterPro"/>
</dbReference>
<dbReference type="CDD" id="cd00488">
    <property type="entry name" value="PCD_DCoH"/>
    <property type="match status" value="1"/>
</dbReference>
<dbReference type="Gene3D" id="3.30.1360.20">
    <property type="entry name" value="Transcriptional coactivator/pterin dehydratase"/>
    <property type="match status" value="1"/>
</dbReference>
<dbReference type="HAMAP" id="MF_00434">
    <property type="entry name" value="Pterin_4_alpha"/>
    <property type="match status" value="1"/>
</dbReference>
<dbReference type="InterPro" id="IPR036428">
    <property type="entry name" value="PCD_sf"/>
</dbReference>
<dbReference type="InterPro" id="IPR001533">
    <property type="entry name" value="Pterin_deHydtase"/>
</dbReference>
<dbReference type="NCBIfam" id="NF002017">
    <property type="entry name" value="PRK00823.1-2"/>
    <property type="match status" value="1"/>
</dbReference>
<dbReference type="PANTHER" id="PTHR12599">
    <property type="entry name" value="PTERIN-4-ALPHA-CARBINOLAMINE DEHYDRATASE"/>
    <property type="match status" value="1"/>
</dbReference>
<dbReference type="PANTHER" id="PTHR12599:SF0">
    <property type="entry name" value="PTERIN-4-ALPHA-CARBINOLAMINE DEHYDRATASE"/>
    <property type="match status" value="1"/>
</dbReference>
<dbReference type="Pfam" id="PF01329">
    <property type="entry name" value="Pterin_4a"/>
    <property type="match status" value="1"/>
</dbReference>
<dbReference type="SUPFAM" id="SSF55248">
    <property type="entry name" value="PCD-like"/>
    <property type="match status" value="1"/>
</dbReference>
<organism>
    <name type="scientific">Mycobacterium tuberculosis (strain ATCC 25177 / H37Ra)</name>
    <dbReference type="NCBI Taxonomy" id="419947"/>
    <lineage>
        <taxon>Bacteria</taxon>
        <taxon>Bacillati</taxon>
        <taxon>Actinomycetota</taxon>
        <taxon>Actinomycetes</taxon>
        <taxon>Mycobacteriales</taxon>
        <taxon>Mycobacteriaceae</taxon>
        <taxon>Mycobacterium</taxon>
        <taxon>Mycobacterium tuberculosis complex</taxon>
    </lineage>
</organism>
<accession>A5U1K8</accession>
<feature type="chain" id="PRO_1000050426" description="Putative pterin-4-alpha-carbinolamine dehydratase">
    <location>
        <begin position="1"/>
        <end position="94"/>
    </location>
</feature>
<comment type="catalytic activity">
    <reaction evidence="1">
        <text>(4aS,6R)-4a-hydroxy-L-erythro-5,6,7,8-tetrahydrobiopterin = (6R)-L-erythro-6,7-dihydrobiopterin + H2O</text>
        <dbReference type="Rhea" id="RHEA:11920"/>
        <dbReference type="ChEBI" id="CHEBI:15377"/>
        <dbReference type="ChEBI" id="CHEBI:15642"/>
        <dbReference type="ChEBI" id="CHEBI:43120"/>
        <dbReference type="EC" id="4.2.1.96"/>
    </reaction>
</comment>
<comment type="similarity">
    <text evidence="1">Belongs to the pterin-4-alpha-carbinolamine dehydratase family.</text>
</comment>
<name>PHS_MYCTA</name>
<keyword id="KW-0456">Lyase</keyword>
<keyword id="KW-1185">Reference proteome</keyword>